<reference key="1">
    <citation type="journal article" date="1992" name="Antimicrob. Agents Chemother.">
        <title>Nucleotide sequence of the ampC-ampR region from the chromosome of Yersinia enterocolitica.</title>
        <authorList>
            <person name="Seoane A."/>
            <person name="Francia M.V."/>
            <person name="Garcia Lobo J.M."/>
        </authorList>
    </citation>
    <scope>NUCLEOTIDE SEQUENCE [GENOMIC DNA]</scope>
    <source>
        <strain>IP97 / Serotype O:5B</strain>
    </source>
</reference>
<reference key="2">
    <citation type="unpublished observations" date="1995-06">
        <authorList>
            <person name="Robison K."/>
        </authorList>
    </citation>
    <scope>IDENTIFICATION</scope>
</reference>
<accession>P45462</accession>
<sequence>IRQNHQDEPQYGQQVAPIDQRVQRLVMALVFAAKSDGHIERKMRSIIEQNMREAGISEQGERLVQQAIDQPLDPQLLARDIQNEEEALELYFLSCAVIDVDHFMERTYLAALGHALKIPQDVRDGIEQDIREKKQSITD</sequence>
<protein>
    <recommendedName>
        <fullName>Uncharacterized protein in ampR 5'region</fullName>
    </recommendedName>
</protein>
<proteinExistence type="predicted"/>
<comment type="similarity">
    <text evidence="1">To E.coli YebE.</text>
</comment>
<evidence type="ECO:0000305" key="1"/>
<organism>
    <name type="scientific">Yersinia enterocolitica</name>
    <dbReference type="NCBI Taxonomy" id="630"/>
    <lineage>
        <taxon>Bacteria</taxon>
        <taxon>Pseudomonadati</taxon>
        <taxon>Pseudomonadota</taxon>
        <taxon>Gammaproteobacteria</taxon>
        <taxon>Enterobacterales</taxon>
        <taxon>Yersiniaceae</taxon>
        <taxon>Yersinia</taxon>
    </lineage>
</organism>
<feature type="chain" id="PRO_0000169042" description="Uncharacterized protein in ampR 5'region">
    <location>
        <begin position="1" status="less than"/>
        <end position="139"/>
    </location>
</feature>
<feature type="non-terminal residue">
    <location>
        <position position="1"/>
    </location>
</feature>
<dbReference type="EMBL" id="X63149">
    <property type="status" value="NOT_ANNOTATED_CDS"/>
    <property type="molecule type" value="Genomic_DNA"/>
</dbReference>
<dbReference type="SMR" id="P45462"/>
<dbReference type="CDD" id="cd07178">
    <property type="entry name" value="terB_like_YebE"/>
    <property type="match status" value="1"/>
</dbReference>
<dbReference type="Gene3D" id="1.10.3680.10">
    <property type="entry name" value="TerB-like"/>
    <property type="match status" value="1"/>
</dbReference>
<dbReference type="InterPro" id="IPR029024">
    <property type="entry name" value="TerB-like"/>
</dbReference>
<dbReference type="InterPro" id="IPR007486">
    <property type="entry name" value="YebE"/>
</dbReference>
<dbReference type="Pfam" id="PF04391">
    <property type="entry name" value="DUF533"/>
    <property type="match status" value="1"/>
</dbReference>
<dbReference type="SUPFAM" id="SSF158682">
    <property type="entry name" value="TerB-like"/>
    <property type="match status" value="1"/>
</dbReference>
<name>YEBE_YEREN</name>